<dbReference type="EMBL" id="CU329670">
    <property type="protein sequence ID" value="CAB11676.1"/>
    <property type="molecule type" value="Genomic_DNA"/>
</dbReference>
<dbReference type="PIR" id="T38449">
    <property type="entry name" value="T38449"/>
</dbReference>
<dbReference type="RefSeq" id="NP_594402.1">
    <property type="nucleotide sequence ID" value="NM_001019833.2"/>
</dbReference>
<dbReference type="SMR" id="O13997"/>
<dbReference type="BioGRID" id="278315">
    <property type="interactions" value="16"/>
</dbReference>
<dbReference type="FunCoup" id="O13997">
    <property type="interactions" value="388"/>
</dbReference>
<dbReference type="STRING" id="284812.O13997"/>
<dbReference type="iPTMnet" id="O13997"/>
<dbReference type="PaxDb" id="4896-SPAC27E2.02.1"/>
<dbReference type="EnsemblFungi" id="SPAC27E2.02.1">
    <property type="protein sequence ID" value="SPAC27E2.02.1:pep"/>
    <property type="gene ID" value="SPAC27E2.02"/>
</dbReference>
<dbReference type="GeneID" id="2541824"/>
<dbReference type="KEGG" id="spo:2541824"/>
<dbReference type="PomBase" id="SPAC27E2.02">
    <property type="gene designation" value="yih1"/>
</dbReference>
<dbReference type="VEuPathDB" id="FungiDB:SPAC27E2.02"/>
<dbReference type="eggNOG" id="KOG3299">
    <property type="taxonomic scope" value="Eukaryota"/>
</dbReference>
<dbReference type="HOGENOM" id="CLU_045276_0_1_1"/>
<dbReference type="InParanoid" id="O13997"/>
<dbReference type="OMA" id="WKPKFDW"/>
<dbReference type="PhylomeDB" id="O13997"/>
<dbReference type="PRO" id="PR:O13997"/>
<dbReference type="Proteomes" id="UP000002485">
    <property type="component" value="Chromosome I"/>
</dbReference>
<dbReference type="GO" id="GO:0005737">
    <property type="term" value="C:cytoplasm"/>
    <property type="evidence" value="ECO:0000318"/>
    <property type="project" value="GO_Central"/>
</dbReference>
<dbReference type="GO" id="GO:0005634">
    <property type="term" value="C:nucleus"/>
    <property type="evidence" value="ECO:0000266"/>
    <property type="project" value="PomBase"/>
</dbReference>
<dbReference type="GO" id="GO:0003779">
    <property type="term" value="F:actin binding"/>
    <property type="evidence" value="ECO:0007669"/>
    <property type="project" value="UniProtKB-KW"/>
</dbReference>
<dbReference type="GO" id="GO:0140311">
    <property type="term" value="F:protein sequestering activity"/>
    <property type="evidence" value="ECO:0000304"/>
    <property type="project" value="PomBase"/>
</dbReference>
<dbReference type="GO" id="GO:0034198">
    <property type="term" value="P:cellular response to amino acid starvation"/>
    <property type="evidence" value="ECO:0000250"/>
    <property type="project" value="UniProtKB"/>
</dbReference>
<dbReference type="GO" id="GO:0140469">
    <property type="term" value="P:GCN2-mediated signaling"/>
    <property type="evidence" value="ECO:0000318"/>
    <property type="project" value="GO_Central"/>
</dbReference>
<dbReference type="GO" id="GO:1990611">
    <property type="term" value="P:regulation of cytoplasmic translational initiation in response to stress"/>
    <property type="evidence" value="ECO:0000250"/>
    <property type="project" value="PomBase"/>
</dbReference>
<dbReference type="GO" id="GO:0006446">
    <property type="term" value="P:regulation of translational initiation"/>
    <property type="evidence" value="ECO:0000318"/>
    <property type="project" value="GO_Central"/>
</dbReference>
<dbReference type="Gene3D" id="3.30.230.30">
    <property type="entry name" value="Impact, N-terminal domain"/>
    <property type="match status" value="1"/>
</dbReference>
<dbReference type="Gene3D" id="3.10.110.10">
    <property type="entry name" value="Ubiquitin Conjugating Enzyme"/>
    <property type="match status" value="1"/>
</dbReference>
<dbReference type="InterPro" id="IPR023582">
    <property type="entry name" value="Impact"/>
</dbReference>
<dbReference type="InterPro" id="IPR001498">
    <property type="entry name" value="Impact_N"/>
</dbReference>
<dbReference type="InterPro" id="IPR036956">
    <property type="entry name" value="Impact_N_sf"/>
</dbReference>
<dbReference type="InterPro" id="IPR020568">
    <property type="entry name" value="Ribosomal_Su5_D2-typ_SF"/>
</dbReference>
<dbReference type="InterPro" id="IPR006575">
    <property type="entry name" value="RWD_dom"/>
</dbReference>
<dbReference type="InterPro" id="IPR016135">
    <property type="entry name" value="UBQ-conjugating_enzyme/RWD"/>
</dbReference>
<dbReference type="PANTHER" id="PTHR16301">
    <property type="entry name" value="IMPACT-RELATED"/>
    <property type="match status" value="1"/>
</dbReference>
<dbReference type="PANTHER" id="PTHR16301:SF25">
    <property type="entry name" value="PROTEIN IMPACT"/>
    <property type="match status" value="1"/>
</dbReference>
<dbReference type="Pfam" id="PF05773">
    <property type="entry name" value="RWD"/>
    <property type="match status" value="1"/>
</dbReference>
<dbReference type="Pfam" id="PF01205">
    <property type="entry name" value="UPF0029"/>
    <property type="match status" value="1"/>
</dbReference>
<dbReference type="SMART" id="SM00591">
    <property type="entry name" value="RWD"/>
    <property type="match status" value="1"/>
</dbReference>
<dbReference type="SUPFAM" id="SSF54211">
    <property type="entry name" value="Ribosomal protein S5 domain 2-like"/>
    <property type="match status" value="1"/>
</dbReference>
<dbReference type="SUPFAM" id="SSF54495">
    <property type="entry name" value="UBC-like"/>
    <property type="match status" value="1"/>
</dbReference>
<dbReference type="PROSITE" id="PS50908">
    <property type="entry name" value="RWD"/>
    <property type="match status" value="1"/>
</dbReference>
<feature type="chain" id="PRO_0000316614" description="Protein IMPACT homolog">
    <location>
        <begin position="1"/>
        <end position="280"/>
    </location>
</feature>
<feature type="domain" description="RWD" evidence="3">
    <location>
        <begin position="9"/>
        <end position="109"/>
    </location>
</feature>
<comment type="function">
    <text evidence="2">Translational regulator that ensures constant high levels of translation under amino acid starvation. Plays a role as a negative regulator of the gcn2 kinase activity; impairs gcn1-mediated gcn2 activation, and hence gcn2-mediated eIF-2-alpha phosphorylation in amino acid-starved cells and subsequent down-regulation of protein synthesis. In normal conditions, it resides in a actin complex and has no activity.</text>
</comment>
<comment type="subunit">
    <text evidence="2">Interacts (via N-terminus) with gcn1 (via C-terminus); this interaction reduces the gcn1-gcn20 complex formation and prevents the interaction of gcn1 with gcn2 protein kinase and gcn2 activation in amino acid-starved cells. Interacts (via C-terminus) with act1; this interaction occurs in a gcn1-independent manner. Interacts with rpl39; this interaction occurs in a gcn1-independent manner. Associates (via middle region) with ribosomes; this association occurs in a gcn1-independent manner and persists under amino acid starvation conditions.</text>
</comment>
<comment type="subcellular location">
    <subcellularLocation>
        <location evidence="1">Cytoplasm</location>
    </subcellularLocation>
    <subcellularLocation>
        <location evidence="1">Nucleus</location>
    </subcellularLocation>
</comment>
<comment type="similarity">
    <text evidence="4">Belongs to the IMPACT family.</text>
</comment>
<evidence type="ECO:0000250" key="1"/>
<evidence type="ECO:0000250" key="2">
    <source>
        <dbReference type="UniProtKB" id="P25637"/>
    </source>
</evidence>
<evidence type="ECO:0000255" key="3">
    <source>
        <dbReference type="PROSITE-ProRule" id="PRU00179"/>
    </source>
</evidence>
<evidence type="ECO:0000305" key="4"/>
<accession>O13997</accession>
<keyword id="KW-0009">Actin-binding</keyword>
<keyword id="KW-0963">Cytoplasm</keyword>
<keyword id="KW-0539">Nucleus</keyword>
<keyword id="KW-1185">Reference proteome</keyword>
<keyword id="KW-0678">Repressor</keyword>
<keyword id="KW-0346">Stress response</keyword>
<keyword id="KW-0810">Translation regulation</keyword>
<reference key="1">
    <citation type="journal article" date="2002" name="Nature">
        <title>The genome sequence of Schizosaccharomyces pombe.</title>
        <authorList>
            <person name="Wood V."/>
            <person name="Gwilliam R."/>
            <person name="Rajandream M.A."/>
            <person name="Lyne M.H."/>
            <person name="Lyne R."/>
            <person name="Stewart A."/>
            <person name="Sgouros J.G."/>
            <person name="Peat N."/>
            <person name="Hayles J."/>
            <person name="Baker S.G."/>
            <person name="Basham D."/>
            <person name="Bowman S."/>
            <person name="Brooks K."/>
            <person name="Brown D."/>
            <person name="Brown S."/>
            <person name="Chillingworth T."/>
            <person name="Churcher C.M."/>
            <person name="Collins M."/>
            <person name="Connor R."/>
            <person name="Cronin A."/>
            <person name="Davis P."/>
            <person name="Feltwell T."/>
            <person name="Fraser A."/>
            <person name="Gentles S."/>
            <person name="Goble A."/>
            <person name="Hamlin N."/>
            <person name="Harris D.E."/>
            <person name="Hidalgo J."/>
            <person name="Hodgson G."/>
            <person name="Holroyd S."/>
            <person name="Hornsby T."/>
            <person name="Howarth S."/>
            <person name="Huckle E.J."/>
            <person name="Hunt S."/>
            <person name="Jagels K."/>
            <person name="James K.D."/>
            <person name="Jones L."/>
            <person name="Jones M."/>
            <person name="Leather S."/>
            <person name="McDonald S."/>
            <person name="McLean J."/>
            <person name="Mooney P."/>
            <person name="Moule S."/>
            <person name="Mungall K.L."/>
            <person name="Murphy L.D."/>
            <person name="Niblett D."/>
            <person name="Odell C."/>
            <person name="Oliver K."/>
            <person name="O'Neil S."/>
            <person name="Pearson D."/>
            <person name="Quail M.A."/>
            <person name="Rabbinowitsch E."/>
            <person name="Rutherford K.M."/>
            <person name="Rutter S."/>
            <person name="Saunders D."/>
            <person name="Seeger K."/>
            <person name="Sharp S."/>
            <person name="Skelton J."/>
            <person name="Simmonds M.N."/>
            <person name="Squares R."/>
            <person name="Squares S."/>
            <person name="Stevens K."/>
            <person name="Taylor K."/>
            <person name="Taylor R.G."/>
            <person name="Tivey A."/>
            <person name="Walsh S.V."/>
            <person name="Warren T."/>
            <person name="Whitehead S."/>
            <person name="Woodward J.R."/>
            <person name="Volckaert G."/>
            <person name="Aert R."/>
            <person name="Robben J."/>
            <person name="Grymonprez B."/>
            <person name="Weltjens I."/>
            <person name="Vanstreels E."/>
            <person name="Rieger M."/>
            <person name="Schaefer M."/>
            <person name="Mueller-Auer S."/>
            <person name="Gabel C."/>
            <person name="Fuchs M."/>
            <person name="Duesterhoeft A."/>
            <person name="Fritzc C."/>
            <person name="Holzer E."/>
            <person name="Moestl D."/>
            <person name="Hilbert H."/>
            <person name="Borzym K."/>
            <person name="Langer I."/>
            <person name="Beck A."/>
            <person name="Lehrach H."/>
            <person name="Reinhardt R."/>
            <person name="Pohl T.M."/>
            <person name="Eger P."/>
            <person name="Zimmermann W."/>
            <person name="Wedler H."/>
            <person name="Wambutt R."/>
            <person name="Purnelle B."/>
            <person name="Goffeau A."/>
            <person name="Cadieu E."/>
            <person name="Dreano S."/>
            <person name="Gloux S."/>
            <person name="Lelaure V."/>
            <person name="Mottier S."/>
            <person name="Galibert F."/>
            <person name="Aves S.J."/>
            <person name="Xiang Z."/>
            <person name="Hunt C."/>
            <person name="Moore K."/>
            <person name="Hurst S.M."/>
            <person name="Lucas M."/>
            <person name="Rochet M."/>
            <person name="Gaillardin C."/>
            <person name="Tallada V.A."/>
            <person name="Garzon A."/>
            <person name="Thode G."/>
            <person name="Daga R.R."/>
            <person name="Cruzado L."/>
            <person name="Jimenez J."/>
            <person name="Sanchez M."/>
            <person name="del Rey F."/>
            <person name="Benito J."/>
            <person name="Dominguez A."/>
            <person name="Revuelta J.L."/>
            <person name="Moreno S."/>
            <person name="Armstrong J."/>
            <person name="Forsburg S.L."/>
            <person name="Cerutti L."/>
            <person name="Lowe T."/>
            <person name="McCombie W.R."/>
            <person name="Paulsen I."/>
            <person name="Potashkin J."/>
            <person name="Shpakovski G.V."/>
            <person name="Ussery D."/>
            <person name="Barrell B.G."/>
            <person name="Nurse P."/>
        </authorList>
    </citation>
    <scope>NUCLEOTIDE SEQUENCE [LARGE SCALE GENOMIC DNA]</scope>
    <source>
        <strain>972 / ATCC 24843</strain>
    </source>
</reference>
<sequence length="280" mass="31485">MENNEEFQDELLALESIYPSCLLPISEQSFTYTLSIPDSSVRLNIQFPLDYPNSAPTVLDAYGIDKTLAEDVLLSVATGDVCIFSYMDLLKELVDIDAEQAAAERESKLQEESDKETPVMLNKSHYVAKTPEIQDEPWKPKFDWKESEPITDRKSTFMAHATRVYSTEEVREALEDLYMDKKVAKANHNMVAYRIISPNGNVIQDNDDDGESAAGSRMSHLLTMMSAENVFVCVSRWFGGVHIGPDRFKHINSSAREAVLLTDAAPSQKKGTEHGKKKKK</sequence>
<proteinExistence type="inferred from homology"/>
<gene>
    <name type="primary">yih1</name>
    <name type="ORF">SPAC27E2.02</name>
</gene>
<organism>
    <name type="scientific">Schizosaccharomyces pombe (strain 972 / ATCC 24843)</name>
    <name type="common">Fission yeast</name>
    <dbReference type="NCBI Taxonomy" id="284812"/>
    <lineage>
        <taxon>Eukaryota</taxon>
        <taxon>Fungi</taxon>
        <taxon>Dikarya</taxon>
        <taxon>Ascomycota</taxon>
        <taxon>Taphrinomycotina</taxon>
        <taxon>Schizosaccharomycetes</taxon>
        <taxon>Schizosaccharomycetales</taxon>
        <taxon>Schizosaccharomycetaceae</taxon>
        <taxon>Schizosaccharomyces</taxon>
    </lineage>
</organism>
<protein>
    <recommendedName>
        <fullName>Protein IMPACT homolog</fullName>
    </recommendedName>
</protein>
<name>YIH1_SCHPO</name>